<organism>
    <name type="scientific">Rickettsia bellii (strain RML369-C)</name>
    <dbReference type="NCBI Taxonomy" id="336407"/>
    <lineage>
        <taxon>Bacteria</taxon>
        <taxon>Pseudomonadati</taxon>
        <taxon>Pseudomonadota</taxon>
        <taxon>Alphaproteobacteria</taxon>
        <taxon>Rickettsiales</taxon>
        <taxon>Rickettsiaceae</taxon>
        <taxon>Rickettsieae</taxon>
        <taxon>Rickettsia</taxon>
        <taxon>belli group</taxon>
    </lineage>
</organism>
<protein>
    <recommendedName>
        <fullName>Putative adhesin RBE_1271</fullName>
    </recommendedName>
</protein>
<gene>
    <name type="ordered locus">RBE_1271</name>
</gene>
<keyword id="KW-0732">Signal</keyword>
<accession>Q1RH12</accession>
<sequence length="228" mass="23996">MKKLLLIAATSATVLSSALSFADCGNDSWYLRVDAGAAMFNKEKDNQTGLKLKSNTAFTGDIGVGNYIAENFRADLTLGTTFSGKLKKSGAVSSLGGANISASHKPNITRLLINGYVDLSNFEMFDVFAGAGIGASMLKEKVSFSGINSGATVSTSYSSKNTTNLAYKLTLGASSQISDGVKAELAYSWISDGKTKGGNVKLFGLGNKQVKGIRYQSHNLTAGLRFDI</sequence>
<evidence type="ECO:0000255" key="1"/>
<name>Y1271_RICBR</name>
<dbReference type="EMBL" id="CP000087">
    <property type="protein sequence ID" value="ABE05352.1"/>
    <property type="molecule type" value="Genomic_DNA"/>
</dbReference>
<dbReference type="RefSeq" id="WP_011477923.1">
    <property type="nucleotide sequence ID" value="NC_007940.1"/>
</dbReference>
<dbReference type="KEGG" id="rbe:RBE_1271"/>
<dbReference type="eggNOG" id="COG3637">
    <property type="taxonomic scope" value="Bacteria"/>
</dbReference>
<dbReference type="HOGENOM" id="CLU_1146500_0_0_5"/>
<dbReference type="OrthoDB" id="5643626at2"/>
<dbReference type="Proteomes" id="UP000001951">
    <property type="component" value="Chromosome"/>
</dbReference>
<dbReference type="Gene3D" id="2.40.160.20">
    <property type="match status" value="1"/>
</dbReference>
<dbReference type="InterPro" id="IPR011250">
    <property type="entry name" value="OMP/PagP_b-brl"/>
</dbReference>
<dbReference type="SUPFAM" id="SSF56925">
    <property type="entry name" value="OMPA-like"/>
    <property type="match status" value="1"/>
</dbReference>
<reference key="1">
    <citation type="journal article" date="2006" name="PLoS Genet.">
        <title>Genome sequence of Rickettsia bellii illuminates the role of amoebae in gene exchanges between intracellular pathogens.</title>
        <authorList>
            <person name="Ogata H."/>
            <person name="La Scola B."/>
            <person name="Audic S."/>
            <person name="Renesto P."/>
            <person name="Blanc G."/>
            <person name="Robert C."/>
            <person name="Fournier P.-E."/>
            <person name="Claverie J.-M."/>
            <person name="Raoult D."/>
        </authorList>
    </citation>
    <scope>NUCLEOTIDE SEQUENCE [LARGE SCALE GENOMIC DNA]</scope>
    <source>
        <strain>RML369-C</strain>
    </source>
</reference>
<feature type="signal peptide" evidence="1">
    <location>
        <begin position="1"/>
        <end position="22"/>
    </location>
</feature>
<feature type="chain" id="PRO_0000317021" description="Putative adhesin RBE_1271">
    <location>
        <begin position="23"/>
        <end position="228"/>
    </location>
</feature>
<proteinExistence type="inferred from homology"/>